<sequence length="250" mass="27388">MAVCGLGSRLGLGSRLGLRGCFGAARLLYPRFQSRGPQGVEDGDRPQPSSKTPRIPKIYTKTGDKGFSSTFTGERRPKDDQVFEAVGTTDELSSAIGFALELVTEKGHTFAEELQKIQCTLQDVGSALATPCSSAREAHLKYTTFKAGPILELEQWIDKYTSQLPPLTAFILPSGGKISSALHFCRAVCRRAERRVVPLVQMGETDANVAKFLNRLSDYLFTLARYAAMKEGNQEKIYMKNDPSAESEGL</sequence>
<evidence type="ECO:0000250" key="1">
    <source>
        <dbReference type="UniProtKB" id="Q9D273"/>
    </source>
</evidence>
<evidence type="ECO:0000255" key="2"/>
<evidence type="ECO:0000256" key="3">
    <source>
        <dbReference type="SAM" id="MobiDB-lite"/>
    </source>
</evidence>
<evidence type="ECO:0000269" key="4">
    <source>
    </source>
</evidence>
<evidence type="ECO:0000269" key="5">
    <source>
    </source>
</evidence>
<evidence type="ECO:0000269" key="6">
    <source>
    </source>
</evidence>
<evidence type="ECO:0000269" key="7">
    <source>
    </source>
</evidence>
<evidence type="ECO:0000269" key="8">
    <source>
    </source>
</evidence>
<evidence type="ECO:0000269" key="9">
    <source>
    </source>
</evidence>
<evidence type="ECO:0000305" key="10"/>
<evidence type="ECO:0000305" key="11">
    <source>
    </source>
</evidence>
<evidence type="ECO:0000305" key="12">
    <source>
    </source>
</evidence>
<evidence type="ECO:0000312" key="13">
    <source>
        <dbReference type="HGNC" id="HGNC:19331"/>
    </source>
</evidence>
<evidence type="ECO:0007744" key="14">
    <source>
    </source>
</evidence>
<evidence type="ECO:0007829" key="15">
    <source>
        <dbReference type="PDB" id="7RUT"/>
    </source>
</evidence>
<gene>
    <name evidence="13" type="primary">MMAB</name>
</gene>
<keyword id="KW-0002">3D-structure</keyword>
<keyword id="KW-0007">Acetylation</keyword>
<keyword id="KW-0067">ATP-binding</keyword>
<keyword id="KW-0225">Disease variant</keyword>
<keyword id="KW-0496">Mitochondrion</keyword>
<keyword id="KW-0547">Nucleotide-binding</keyword>
<keyword id="KW-0597">Phosphoprotein</keyword>
<keyword id="KW-1267">Proteomics identification</keyword>
<keyword id="KW-1185">Reference proteome</keyword>
<keyword id="KW-0808">Transferase</keyword>
<keyword id="KW-0809">Transit peptide</keyword>
<reference key="1">
    <citation type="journal article" date="2002" name="Hum. Mol. Genet.">
        <title>Identification of the gene responsible for the cblB complementation group of vitamin B(12)-dependent methylmalonic aciduria.</title>
        <authorList>
            <person name="Dobson C.M."/>
            <person name="Wai T."/>
            <person name="Leclerc D."/>
            <person name="Kadir H."/>
            <person name="Narang M."/>
            <person name="Lerner-Ellis J.P."/>
            <person name="Hudson T.J."/>
            <person name="Rosenblatt D.S."/>
            <person name="Gravel R.A."/>
        </authorList>
    </citation>
    <scope>NUCLEOTIDE SEQUENCE [GENOMIC DNA]</scope>
    <scope>VARIANTS MACB THR-135; TRP-191 AND LYS-193</scope>
    <scope>VARIANTS GLN-19; TRP-186 AND LYS-239</scope>
</reference>
<reference key="2">
    <citation type="journal article" date="2003" name="J. Biol. Chem.">
        <title>Identification of the human and bovine ATP:Cob(I)alamin adenosyltransferase cDNAs based on complementation of a bacterial mutant.</title>
        <authorList>
            <person name="Leal N.A."/>
            <person name="Park S.D."/>
            <person name="Kima P.E."/>
            <person name="Bobik T.A."/>
        </authorList>
    </citation>
    <scope>NUCLEOTIDE SEQUENCE [MRNA]</scope>
    <scope>FUNCTION</scope>
    <scope>CATALYTIC ACTIVITY</scope>
    <scope>VARIANTS GLN-19 AND LYS-239</scope>
    <scope>INVOLVEMENT IN DISEASE</scope>
</reference>
<reference key="3">
    <citation type="submission" date="2008-12" db="EMBL/GenBank/DDBJ databases">
        <authorList>
            <consortium name="NHLBI resequencing and genotyping service (RS&amp;G)"/>
        </authorList>
    </citation>
    <scope>NUCLEOTIDE SEQUENCE [GENOMIC DNA]</scope>
</reference>
<reference key="4">
    <citation type="journal article" date="2004" name="Genome Res.">
        <title>The status, quality, and expansion of the NIH full-length cDNA project: the Mammalian Gene Collection (MGC).</title>
        <authorList>
            <consortium name="The MGC Project Team"/>
        </authorList>
    </citation>
    <scope>NUCLEOTIDE SEQUENCE [LARGE SCALE MRNA]</scope>
    <scope>VARIANTS GLN-19 AND LYS-239</scope>
    <source>
        <tissue>Lung</tissue>
    </source>
</reference>
<reference key="5">
    <citation type="journal article" date="2011" name="BMC Syst. Biol.">
        <title>Initial characterization of the human central proteome.</title>
        <authorList>
            <person name="Burkard T.R."/>
            <person name="Planyavsky M."/>
            <person name="Kaupe I."/>
            <person name="Breitwieser F.P."/>
            <person name="Buerckstuemmer T."/>
            <person name="Bennett K.L."/>
            <person name="Superti-Furga G."/>
            <person name="Colinge J."/>
        </authorList>
    </citation>
    <scope>IDENTIFICATION BY MASS SPECTROMETRY [LARGE SCALE ANALYSIS]</scope>
</reference>
<reference key="6">
    <citation type="journal article" date="2014" name="J. Proteomics">
        <title>An enzyme assisted RP-RPLC approach for in-depth analysis of human liver phosphoproteome.</title>
        <authorList>
            <person name="Bian Y."/>
            <person name="Song C."/>
            <person name="Cheng K."/>
            <person name="Dong M."/>
            <person name="Wang F."/>
            <person name="Huang J."/>
            <person name="Sun D."/>
            <person name="Wang L."/>
            <person name="Ye M."/>
            <person name="Zou H."/>
        </authorList>
    </citation>
    <scope>PHOSPHORYLATION [LARGE SCALE ANALYSIS] AT SER-134</scope>
    <scope>IDENTIFICATION BY MASS SPECTROMETRY [LARGE SCALE ANALYSIS]</scope>
    <source>
        <tissue>Liver</tissue>
    </source>
</reference>
<reference key="7">
    <citation type="journal article" date="2015" name="Proteomics">
        <title>N-terminome analysis of the human mitochondrial proteome.</title>
        <authorList>
            <person name="Vaca Jacome A.S."/>
            <person name="Rabilloud T."/>
            <person name="Schaeffer-Reiss C."/>
            <person name="Rompais M."/>
            <person name="Ayoub D."/>
            <person name="Lane L."/>
            <person name="Bairoch A."/>
            <person name="Van Dorsselaer A."/>
            <person name="Carapito C."/>
        </authorList>
    </citation>
    <scope>IDENTIFICATION BY MASS SPECTROMETRY [LARGE SCALE ANALYSIS]</scope>
</reference>
<reference key="8">
    <citation type="journal article" date="2017" name="Hum. Mutat.">
        <title>Protein destabilization and loss of protein-protein interaction are fundamental mechanisms in cblA-type methylmalonic aciduria.</title>
        <authorList>
            <person name="Plessl T."/>
            <person name="Buerer C."/>
            <person name="Lutz S."/>
            <person name="Yue W.W."/>
            <person name="Baumgartner M.R."/>
            <person name="Froese D.S."/>
        </authorList>
    </citation>
    <scope>FUNCTION</scope>
    <scope>ADENOSYLCOBALAMIN-BINDING</scope>
</reference>
<reference key="9">
    <citation type="journal article" date="2006" name="Biochemistry">
        <title>Structure of ATP-bound human ATP:cobalamin adenosyltransferase.</title>
        <authorList>
            <person name="Schubert H.L."/>
            <person name="Hill C.P."/>
        </authorList>
    </citation>
    <scope>X-RAY CRYSTALLOGRAPHY (2.5 ANGSTROMS) OF 55-250 IN COMPLEX WITH ATP</scope>
    <scope>SUBUNIT</scope>
</reference>
<reference key="10">
    <citation type="journal article" date="2005" name="Mol. Genet. Metab.">
        <title>Genetic analysis of three genes causing isolated methylmalonic acidemia: identification of 21 novel allelic variants.</title>
        <authorList>
            <person name="Martinez M.A."/>
            <person name="Rincon A."/>
            <person name="Desviat L.R."/>
            <person name="Merinero B."/>
            <person name="Ugarte M."/>
            <person name="Perez B."/>
        </authorList>
    </citation>
    <scope>VARIANTS MACB THR-96 AND TRP-191</scope>
</reference>
<reference key="11">
    <citation type="journal article" date="2008" name="J. Inherit. Metab. Dis.">
        <title>Methylmalonic acidaemia: examination of genotype and biochemical data in 32 patients belonging to mut, cblA or cblB complementation group.</title>
        <authorList>
            <person name="Merinero B."/>
            <person name="Perez B."/>
            <person name="Perez-Cerda C."/>
            <person name="Rincon A."/>
            <person name="Desviat L.R."/>
            <person name="Martinez M.A."/>
            <person name="Sala P.R."/>
            <person name="Garcia M.J."/>
            <person name="Aldamiz-Echevarria L."/>
            <person name="Campos J."/>
            <person name="Cornejo V."/>
            <person name="Del Toro M."/>
            <person name="Mahfoud A."/>
            <person name="Martinez-Pardo M."/>
            <person name="Parini R."/>
            <person name="Pedron C."/>
            <person name="Pena-Quintana L."/>
            <person name="Perez M."/>
            <person name="Pourfarzam M."/>
            <person name="Ugarte M."/>
        </authorList>
    </citation>
    <scope>VARIANTS MACB THR-96; TRP-186 AND TRP-191</scope>
</reference>
<comment type="function">
    <text evidence="5 12">Converts cob(I)alamin to adenosylcobalamin (adenosylcob(III)alamin), a coenzyme for methylmalonyl-CoA mutase, therefore participates in the final step of the vitamin B12 conversion (PubMed:12514191). Generates adenosylcobalamin (AdoCbl) and directly delivers the cofactor to MUT in a transfer that is stimulated by ATP-binding to MMAB and gated by MMAA (Probable).</text>
</comment>
<comment type="catalytic activity">
    <reaction evidence="5">
        <text>cob(I)alamin-[corrinoid adenosyltransferase] + ATP = apo-[corrinoid adenosyltransferase] + adenosylcob(III)alamin + triphosphate</text>
        <dbReference type="Rhea" id="RHEA:56796"/>
        <dbReference type="Rhea" id="RHEA-COMP:14743"/>
        <dbReference type="Rhea" id="RHEA-COMP:14744"/>
        <dbReference type="ChEBI" id="CHEBI:18036"/>
        <dbReference type="ChEBI" id="CHEBI:18408"/>
        <dbReference type="ChEBI" id="CHEBI:30616"/>
        <dbReference type="ChEBI" id="CHEBI:60488"/>
        <dbReference type="ChEBI" id="CHEBI:83228"/>
    </reaction>
    <physiologicalReaction direction="left-to-right" evidence="11">
        <dbReference type="Rhea" id="RHEA:56797"/>
    </physiologicalReaction>
</comment>
<comment type="subunit">
    <text evidence="8">Homotrimer.</text>
</comment>
<comment type="interaction">
    <interactant intactId="EBI-7825413">
        <id>Q96EY8</id>
    </interactant>
    <interactant intactId="EBI-1049597">
        <id>P27797</id>
        <label>CALR</label>
    </interactant>
    <organismsDiffer>false</organismsDiffer>
    <experiments>3</experiments>
</comment>
<comment type="interaction">
    <interactant intactId="EBI-7825413">
        <id>Q96EY8</id>
    </interactant>
    <interactant intactId="EBI-11524851">
        <id>Q8NA61-2</id>
        <label>CBY2</label>
    </interactant>
    <organismsDiffer>false</organismsDiffer>
    <experiments>3</experiments>
</comment>
<comment type="interaction">
    <interactant intactId="EBI-7825413">
        <id>Q96EY8</id>
    </interactant>
    <interactant intactId="EBI-359002">
        <id>P11182</id>
        <label>DBT</label>
    </interactant>
    <organismsDiffer>false</organismsDiffer>
    <experiments>3</experiments>
</comment>
<comment type="interaction">
    <interactant intactId="EBI-7825413">
        <id>Q96EY8</id>
    </interactant>
    <interactant intactId="EBI-351007">
        <id>P36957</id>
        <label>DLST</label>
    </interactant>
    <organismsDiffer>false</organismsDiffer>
    <experiments>3</experiments>
</comment>
<comment type="interaction">
    <interactant intactId="EBI-7825413">
        <id>Q96EY8</id>
    </interactant>
    <interactant intactId="EBI-1055945">
        <id>Q8TDX7</id>
        <label>NEK7</label>
    </interactant>
    <organismsDiffer>false</organismsDiffer>
    <experiments>3</experiments>
</comment>
<comment type="interaction">
    <interactant intactId="EBI-7825413">
        <id>Q96EY8</id>
    </interactant>
    <interactant intactId="EBI-748974">
        <id>Q96CV9</id>
        <label>OPTN</label>
    </interactant>
    <organismsDiffer>false</organismsDiffer>
    <experiments>3</experiments>
</comment>
<comment type="subcellular location">
    <subcellularLocation>
        <location evidence="10">Mitochondrion</location>
    </subcellularLocation>
</comment>
<comment type="tissue specificity">
    <text>Expressed in liver and skeletal muscle.</text>
</comment>
<comment type="disease" evidence="4 7 9">
    <disease id="DI-00748">
        <name>Methylmalonic aciduria, cblB type</name>
        <acronym>MACB</acronym>
        <description>An autosomal recessive disorder of methylmalonate and cobalamin metabolism due to defective synthesis of adenosylcobalamin.</description>
        <dbReference type="MIM" id="251110"/>
    </disease>
    <text>The disease is caused by variants affecting the gene represented in this entry.</text>
</comment>
<comment type="similarity">
    <text evidence="10">Belongs to the Cob(I)alamin adenosyltransferase family.</text>
</comment>
<protein>
    <recommendedName>
        <fullName evidence="10">Corrinoid adenosyltransferase MMAB</fullName>
        <ecNumber evidence="5">2.5.1.-</ecNumber>
    </recommendedName>
    <alternativeName>
        <fullName>ATP:co(I)rrinoid adenosyltransferase MMAB</fullName>
    </alternativeName>
    <alternativeName>
        <fullName>Methylmalonic aciduria type B protein</fullName>
    </alternativeName>
</protein>
<dbReference type="EC" id="2.5.1.-" evidence="5"/>
<dbReference type="EMBL" id="AF550404">
    <property type="protein sequence ID" value="AAN85091.1"/>
    <property type="molecule type" value="Genomic_DNA"/>
</dbReference>
<dbReference type="EMBL" id="AF550396">
    <property type="protein sequence ID" value="AAN85091.1"/>
    <property type="status" value="JOINED"/>
    <property type="molecule type" value="Genomic_DNA"/>
</dbReference>
<dbReference type="EMBL" id="AF550397">
    <property type="protein sequence ID" value="AAN85091.1"/>
    <property type="status" value="JOINED"/>
    <property type="molecule type" value="Genomic_DNA"/>
</dbReference>
<dbReference type="EMBL" id="AF550398">
    <property type="protein sequence ID" value="AAN85091.1"/>
    <property type="status" value="JOINED"/>
    <property type="molecule type" value="Genomic_DNA"/>
</dbReference>
<dbReference type="EMBL" id="AF550399">
    <property type="protein sequence ID" value="AAN85091.1"/>
    <property type="status" value="JOINED"/>
    <property type="molecule type" value="Genomic_DNA"/>
</dbReference>
<dbReference type="EMBL" id="AF550400">
    <property type="protein sequence ID" value="AAN85091.1"/>
    <property type="status" value="JOINED"/>
    <property type="molecule type" value="Genomic_DNA"/>
</dbReference>
<dbReference type="EMBL" id="AF550401">
    <property type="protein sequence ID" value="AAN85091.1"/>
    <property type="status" value="JOINED"/>
    <property type="molecule type" value="Genomic_DNA"/>
</dbReference>
<dbReference type="EMBL" id="AF550402">
    <property type="protein sequence ID" value="AAN85091.1"/>
    <property type="status" value="JOINED"/>
    <property type="molecule type" value="Genomic_DNA"/>
</dbReference>
<dbReference type="EMBL" id="AF550403">
    <property type="protein sequence ID" value="AAN85091.1"/>
    <property type="status" value="JOINED"/>
    <property type="molecule type" value="Genomic_DNA"/>
</dbReference>
<dbReference type="EMBL" id="FJ515859">
    <property type="protein sequence ID" value="ACS13749.1"/>
    <property type="molecule type" value="Genomic_DNA"/>
</dbReference>
<dbReference type="EMBL" id="BC005054">
    <property type="protein sequence ID" value="AAH05054.2"/>
    <property type="molecule type" value="mRNA"/>
</dbReference>
<dbReference type="EMBL" id="BC011831">
    <property type="protein sequence ID" value="AAH11831.1"/>
    <property type="molecule type" value="mRNA"/>
</dbReference>
<dbReference type="CCDS" id="CCDS9131.1"/>
<dbReference type="RefSeq" id="NP_443077.1">
    <property type="nucleotide sequence ID" value="NM_052845.4"/>
</dbReference>
<dbReference type="PDB" id="2IDX">
    <property type="method" value="X-ray"/>
    <property type="resolution" value="2.50 A"/>
    <property type="chains" value="A/B/C=56-250"/>
</dbReference>
<dbReference type="PDB" id="6D5K">
    <property type="method" value="X-ray"/>
    <property type="resolution" value="2.85 A"/>
    <property type="chains" value="A/B/C=55-250"/>
</dbReference>
<dbReference type="PDB" id="6D5X">
    <property type="method" value="X-ray"/>
    <property type="resolution" value="2.40 A"/>
    <property type="chains" value="A/B/C=55-250"/>
</dbReference>
<dbReference type="PDB" id="7RUT">
    <property type="method" value="X-ray"/>
    <property type="resolution" value="1.50 A"/>
    <property type="chains" value="A/B/C/D/E/F=55-250"/>
</dbReference>
<dbReference type="PDB" id="7RUU">
    <property type="method" value="X-ray"/>
    <property type="resolution" value="1.85 A"/>
    <property type="chains" value="A/B/C/D=55-250"/>
</dbReference>
<dbReference type="PDB" id="7RUV">
    <property type="method" value="X-ray"/>
    <property type="resolution" value="2.10 A"/>
    <property type="chains" value="A/B/C/D=55-250"/>
</dbReference>
<dbReference type="PDBsum" id="2IDX"/>
<dbReference type="PDBsum" id="6D5K"/>
<dbReference type="PDBsum" id="6D5X"/>
<dbReference type="PDBsum" id="7RUT"/>
<dbReference type="PDBsum" id="7RUU"/>
<dbReference type="PDBsum" id="7RUV"/>
<dbReference type="SMR" id="Q96EY8"/>
<dbReference type="BioGRID" id="130605">
    <property type="interactions" value="125"/>
</dbReference>
<dbReference type="FunCoup" id="Q96EY8">
    <property type="interactions" value="546"/>
</dbReference>
<dbReference type="IntAct" id="Q96EY8">
    <property type="interactions" value="55"/>
</dbReference>
<dbReference type="MINT" id="Q96EY8"/>
<dbReference type="STRING" id="9606.ENSP00000445920"/>
<dbReference type="DrugBank" id="DB00115">
    <property type="generic name" value="Cyanocobalamin"/>
</dbReference>
<dbReference type="DrugCentral" id="Q96EY8"/>
<dbReference type="GlyGen" id="Q96EY8">
    <property type="glycosylation" value="3 sites, 1 O-linked glycan (2 sites)"/>
</dbReference>
<dbReference type="iPTMnet" id="Q96EY8"/>
<dbReference type="MetOSite" id="Q96EY8"/>
<dbReference type="PhosphoSitePlus" id="Q96EY8"/>
<dbReference type="SwissPalm" id="Q96EY8"/>
<dbReference type="BioMuta" id="MMAB"/>
<dbReference type="DMDM" id="38258221"/>
<dbReference type="jPOST" id="Q96EY8"/>
<dbReference type="MassIVE" id="Q96EY8"/>
<dbReference type="PaxDb" id="9606-ENSP00000445920"/>
<dbReference type="PeptideAtlas" id="Q96EY8"/>
<dbReference type="ProteomicsDB" id="76474"/>
<dbReference type="Pumba" id="Q96EY8"/>
<dbReference type="Antibodypedia" id="30891">
    <property type="antibodies" value="198 antibodies from 26 providers"/>
</dbReference>
<dbReference type="DNASU" id="326625"/>
<dbReference type="Ensembl" id="ENST00000545712.7">
    <property type="protein sequence ID" value="ENSP00000445920.1"/>
    <property type="gene ID" value="ENSG00000139428.12"/>
</dbReference>
<dbReference type="GeneID" id="326625"/>
<dbReference type="KEGG" id="hsa:326625"/>
<dbReference type="MANE-Select" id="ENST00000545712.7">
    <property type="protein sequence ID" value="ENSP00000445920.1"/>
    <property type="RefSeq nucleotide sequence ID" value="NM_052845.4"/>
    <property type="RefSeq protein sequence ID" value="NP_443077.1"/>
</dbReference>
<dbReference type="UCSC" id="uc001tou.4">
    <property type="organism name" value="human"/>
</dbReference>
<dbReference type="AGR" id="HGNC:19331"/>
<dbReference type="CTD" id="326625"/>
<dbReference type="DisGeNET" id="326625"/>
<dbReference type="GeneCards" id="MMAB"/>
<dbReference type="GeneReviews" id="MMAB"/>
<dbReference type="HGNC" id="HGNC:19331">
    <property type="gene designation" value="MMAB"/>
</dbReference>
<dbReference type="HPA" id="ENSG00000139428">
    <property type="expression patterns" value="Tissue enhanced (liver)"/>
</dbReference>
<dbReference type="MalaCards" id="MMAB"/>
<dbReference type="MIM" id="251110">
    <property type="type" value="phenotype"/>
</dbReference>
<dbReference type="MIM" id="607568">
    <property type="type" value="gene"/>
</dbReference>
<dbReference type="neXtProt" id="NX_Q96EY8"/>
<dbReference type="OpenTargets" id="ENSG00000139428"/>
<dbReference type="Orphanet" id="79311">
    <property type="disease" value="Vitamin B12-responsive methylmalonic acidemia type cblB"/>
</dbReference>
<dbReference type="PharmGKB" id="PA134864025"/>
<dbReference type="VEuPathDB" id="HostDB:ENSG00000139428"/>
<dbReference type="eggNOG" id="ENOG502QS64">
    <property type="taxonomic scope" value="Eukaryota"/>
</dbReference>
<dbReference type="GeneTree" id="ENSGT00390000008432"/>
<dbReference type="HOGENOM" id="CLU_083486_1_0_1"/>
<dbReference type="InParanoid" id="Q96EY8"/>
<dbReference type="OMA" id="HQACTVV"/>
<dbReference type="OrthoDB" id="549173at2759"/>
<dbReference type="PAN-GO" id="Q96EY8">
    <property type="GO annotations" value="1 GO annotation based on evolutionary models"/>
</dbReference>
<dbReference type="PhylomeDB" id="Q96EY8"/>
<dbReference type="TreeFam" id="TF312942"/>
<dbReference type="BioCyc" id="MetaCyc:HS13779-MONOMER"/>
<dbReference type="BRENDA" id="2.5.1.17">
    <property type="organism ID" value="2681"/>
</dbReference>
<dbReference type="PathwayCommons" id="Q96EY8"/>
<dbReference type="Reactome" id="R-HSA-3359471">
    <property type="pathway name" value="Defective MMAB causes MMA, cblB type"/>
</dbReference>
<dbReference type="Reactome" id="R-HSA-9759218">
    <property type="pathway name" value="Cobalamin (Cbl) metabolism"/>
</dbReference>
<dbReference type="SignaLink" id="Q96EY8"/>
<dbReference type="BioGRID-ORCS" id="326625">
    <property type="hits" value="18 hits in 1165 CRISPR screens"/>
</dbReference>
<dbReference type="ChiTaRS" id="MMAB">
    <property type="organism name" value="human"/>
</dbReference>
<dbReference type="EvolutionaryTrace" id="Q96EY8"/>
<dbReference type="GeneWiki" id="MMAB"/>
<dbReference type="GenomeRNAi" id="326625"/>
<dbReference type="Pharos" id="Q96EY8">
    <property type="development level" value="Tbio"/>
</dbReference>
<dbReference type="PRO" id="PR:Q96EY8"/>
<dbReference type="Proteomes" id="UP000005640">
    <property type="component" value="Chromosome 12"/>
</dbReference>
<dbReference type="RNAct" id="Q96EY8">
    <property type="molecule type" value="protein"/>
</dbReference>
<dbReference type="Bgee" id="ENSG00000139428">
    <property type="expression patterns" value="Expressed in right lobe of liver and 164 other cell types or tissues"/>
</dbReference>
<dbReference type="ExpressionAtlas" id="Q96EY8">
    <property type="expression patterns" value="baseline and differential"/>
</dbReference>
<dbReference type="GO" id="GO:0005759">
    <property type="term" value="C:mitochondrial matrix"/>
    <property type="evidence" value="ECO:0000304"/>
    <property type="project" value="Reactome"/>
</dbReference>
<dbReference type="GO" id="GO:0005739">
    <property type="term" value="C:mitochondrion"/>
    <property type="evidence" value="ECO:0006056"/>
    <property type="project" value="FlyBase"/>
</dbReference>
<dbReference type="GO" id="GO:0005524">
    <property type="term" value="F:ATP binding"/>
    <property type="evidence" value="ECO:0007669"/>
    <property type="project" value="UniProtKB-KW"/>
</dbReference>
<dbReference type="GO" id="GO:0031419">
    <property type="term" value="F:cobalamin binding"/>
    <property type="evidence" value="ECO:0000314"/>
    <property type="project" value="UniProtKB"/>
</dbReference>
<dbReference type="GO" id="GO:0008817">
    <property type="term" value="F:corrinoid adenosyltransferase activity"/>
    <property type="evidence" value="ECO:0000314"/>
    <property type="project" value="MGI"/>
</dbReference>
<dbReference type="GO" id="GO:0016765">
    <property type="term" value="F:transferase activity, transferring alkyl or aryl (other than methyl) groups"/>
    <property type="evidence" value="ECO:0000314"/>
    <property type="project" value="UniProtKB"/>
</dbReference>
<dbReference type="GO" id="GO:0009235">
    <property type="term" value="P:cobalamin metabolic process"/>
    <property type="evidence" value="ECO:0000314"/>
    <property type="project" value="UniProtKB"/>
</dbReference>
<dbReference type="FunFam" id="1.20.1200.10:FF:000001">
    <property type="entry name" value="Cob(I)yrinic acid a,c-diamide adenosyltransferase"/>
    <property type="match status" value="1"/>
</dbReference>
<dbReference type="Gene3D" id="1.20.1200.10">
    <property type="entry name" value="Cobalamin adenosyltransferase-like"/>
    <property type="match status" value="1"/>
</dbReference>
<dbReference type="InterPro" id="IPR016030">
    <property type="entry name" value="CblAdoTrfase-like"/>
</dbReference>
<dbReference type="InterPro" id="IPR036451">
    <property type="entry name" value="CblAdoTrfase-like_sf"/>
</dbReference>
<dbReference type="InterPro" id="IPR029499">
    <property type="entry name" value="PduO-typ"/>
</dbReference>
<dbReference type="NCBIfam" id="TIGR00636">
    <property type="entry name" value="PduO_Nterm"/>
    <property type="match status" value="1"/>
</dbReference>
<dbReference type="PANTHER" id="PTHR12213">
    <property type="entry name" value="CORRINOID ADENOSYLTRANSFERASE"/>
    <property type="match status" value="1"/>
</dbReference>
<dbReference type="PANTHER" id="PTHR12213:SF0">
    <property type="entry name" value="CORRINOID ADENOSYLTRANSFERASE MMAB"/>
    <property type="match status" value="1"/>
</dbReference>
<dbReference type="Pfam" id="PF01923">
    <property type="entry name" value="Cob_adeno_trans"/>
    <property type="match status" value="1"/>
</dbReference>
<dbReference type="SUPFAM" id="SSF89028">
    <property type="entry name" value="Cobalamin adenosyltransferase-like"/>
    <property type="match status" value="1"/>
</dbReference>
<feature type="transit peptide" description="Mitochondrion" evidence="2">
    <location>
        <begin position="1"/>
        <end position="32"/>
    </location>
</feature>
<feature type="chain" id="PRO_0000005568" description="Corrinoid adenosyltransferase MMAB">
    <location>
        <begin position="33"/>
        <end position="250"/>
    </location>
</feature>
<feature type="region of interest" description="Disordered" evidence="3">
    <location>
        <begin position="34"/>
        <end position="59"/>
    </location>
</feature>
<feature type="binding site" evidence="8">
    <location>
        <begin position="60"/>
        <end position="63"/>
    </location>
    <ligand>
        <name>ATP</name>
        <dbReference type="ChEBI" id="CHEBI:30616"/>
    </ligand>
</feature>
<feature type="binding site" evidence="8">
    <location>
        <begin position="68"/>
        <end position="69"/>
    </location>
    <ligand>
        <name>ATP</name>
        <dbReference type="ChEBI" id="CHEBI:30616"/>
    </ligand>
</feature>
<feature type="binding site" evidence="8">
    <location>
        <position position="78"/>
    </location>
    <ligand>
        <name>ATP</name>
        <dbReference type="ChEBI" id="CHEBI:30616"/>
    </ligand>
</feature>
<feature type="binding site" evidence="8">
    <location>
        <begin position="190"/>
        <end position="194"/>
    </location>
    <ligand>
        <name>ATP</name>
        <dbReference type="ChEBI" id="CHEBI:30616"/>
    </ligand>
</feature>
<feature type="binding site" evidence="8">
    <location>
        <position position="214"/>
    </location>
    <ligand>
        <name>ATP</name>
        <dbReference type="ChEBI" id="CHEBI:30616"/>
    </ligand>
</feature>
<feature type="modified residue" description="Phosphoserine" evidence="14">
    <location>
        <position position="134"/>
    </location>
</feature>
<feature type="modified residue" description="N6-succinyllysine" evidence="1">
    <location>
        <position position="211"/>
    </location>
</feature>
<feature type="modified residue" description="N6-acetyllysine; alternate" evidence="1">
    <location>
        <position position="230"/>
    </location>
</feature>
<feature type="modified residue" description="N6-succinyllysine; alternate" evidence="1">
    <location>
        <position position="230"/>
    </location>
</feature>
<feature type="sequence variant" id="VAR_038803" description="In dbSNP:rs10774775.">
    <original>R</original>
    <variation>H</variation>
    <location>
        <position position="19"/>
    </location>
</feature>
<feature type="sequence variant" id="VAR_017203" description="In dbSNP:rs36013132." evidence="4 5 6">
    <original>R</original>
    <variation>Q</variation>
    <location>
        <position position="19"/>
    </location>
</feature>
<feature type="sequence variant" id="VAR_023471" description="In MACB; dbSNP:rs864309509." evidence="7 9">
    <original>I</original>
    <variation>T</variation>
    <location>
        <position position="96"/>
    </location>
</feature>
<feature type="sequence variant" id="VAR_017204" description="In MACB; dbSNP:rs35648932." evidence="4">
    <original>A</original>
    <variation>T</variation>
    <location>
        <position position="135"/>
    </location>
</feature>
<feature type="sequence variant" id="VAR_017205" description="In MACB; dbSNP:rs28941784." evidence="4 9">
    <original>R</original>
    <variation>W</variation>
    <location>
        <position position="186"/>
    </location>
</feature>
<feature type="sequence variant" id="VAR_017206" description="In MACB; dbSNP:rs376128990." evidence="4 7 9">
    <original>R</original>
    <variation>W</variation>
    <location>
        <position position="191"/>
    </location>
</feature>
<feature type="sequence variant" id="VAR_017207" description="In MACB; dbSNP:rs749758687." evidence="4">
    <original>E</original>
    <variation>K</variation>
    <location>
        <position position="193"/>
    </location>
</feature>
<feature type="sequence variant" id="VAR_017208" description="In dbSNP:rs9593." evidence="4 5 6">
    <original>M</original>
    <variation>K</variation>
    <location>
        <position position="239"/>
    </location>
</feature>
<feature type="turn" evidence="15">
    <location>
        <begin position="62"/>
        <end position="65"/>
    </location>
</feature>
<feature type="strand" evidence="15">
    <location>
        <begin position="66"/>
        <end position="69"/>
    </location>
</feature>
<feature type="strand" evidence="15">
    <location>
        <begin position="75"/>
        <end position="77"/>
    </location>
</feature>
<feature type="helix" evidence="15">
    <location>
        <begin position="81"/>
        <end position="106"/>
    </location>
</feature>
<feature type="helix" evidence="15">
    <location>
        <begin position="111"/>
        <end position="128"/>
    </location>
</feature>
<feature type="turn" evidence="15">
    <location>
        <begin position="132"/>
        <end position="134"/>
    </location>
</feature>
<feature type="helix" evidence="15">
    <location>
        <begin position="137"/>
        <end position="140"/>
    </location>
</feature>
<feature type="helix" evidence="15">
    <location>
        <begin position="148"/>
        <end position="161"/>
    </location>
</feature>
<feature type="helix" evidence="15">
    <location>
        <begin position="177"/>
        <end position="201"/>
    </location>
</feature>
<feature type="helix" evidence="15">
    <location>
        <begin position="207"/>
        <end position="231"/>
    </location>
</feature>
<organism>
    <name type="scientific">Homo sapiens</name>
    <name type="common">Human</name>
    <dbReference type="NCBI Taxonomy" id="9606"/>
    <lineage>
        <taxon>Eukaryota</taxon>
        <taxon>Metazoa</taxon>
        <taxon>Chordata</taxon>
        <taxon>Craniata</taxon>
        <taxon>Vertebrata</taxon>
        <taxon>Euteleostomi</taxon>
        <taxon>Mammalia</taxon>
        <taxon>Eutheria</taxon>
        <taxon>Euarchontoglires</taxon>
        <taxon>Primates</taxon>
        <taxon>Haplorrhini</taxon>
        <taxon>Catarrhini</taxon>
        <taxon>Hominidae</taxon>
        <taxon>Homo</taxon>
    </lineage>
</organism>
<accession>Q96EY8</accession>
<accession>C5HU05</accession>
<accession>Q9BSH0</accession>
<proteinExistence type="evidence at protein level"/>
<name>MMAB_HUMAN</name>